<reference key="1">
    <citation type="journal article" date="2006" name="Proc. Natl. Acad. Sci. U.S.A.">
        <title>The partitioned Rhizobium etli genome: genetic and metabolic redundancy in seven interacting replicons.</title>
        <authorList>
            <person name="Gonzalez V."/>
            <person name="Santamaria R.I."/>
            <person name="Bustos P."/>
            <person name="Hernandez-Gonzalez I."/>
            <person name="Medrano-Soto A."/>
            <person name="Moreno-Hagelsieb G."/>
            <person name="Janga S.C."/>
            <person name="Ramirez M.A."/>
            <person name="Jimenez-Jacinto V."/>
            <person name="Collado-Vides J."/>
            <person name="Davila G."/>
        </authorList>
    </citation>
    <scope>NUCLEOTIDE SEQUENCE [LARGE SCALE GENOMIC DNA]</scope>
    <source>
        <strain>ATCC 51251 / DSM 11541 / JCM 21823 / NBRC 15573 / CFN 42</strain>
    </source>
</reference>
<keyword id="KW-0963">Cytoplasm</keyword>
<keyword id="KW-0489">Methyltransferase</keyword>
<keyword id="KW-1185">Reference proteome</keyword>
<keyword id="KW-0698">rRNA processing</keyword>
<keyword id="KW-0949">S-adenosyl-L-methionine</keyword>
<keyword id="KW-0808">Transferase</keyword>
<organism>
    <name type="scientific">Rhizobium etli (strain ATCC 51251 / DSM 11541 / JCM 21823 / NBRC 15573 / CFN 42)</name>
    <dbReference type="NCBI Taxonomy" id="347834"/>
    <lineage>
        <taxon>Bacteria</taxon>
        <taxon>Pseudomonadati</taxon>
        <taxon>Pseudomonadota</taxon>
        <taxon>Alphaproteobacteria</taxon>
        <taxon>Hyphomicrobiales</taxon>
        <taxon>Rhizobiaceae</taxon>
        <taxon>Rhizobium/Agrobacterium group</taxon>
        <taxon>Rhizobium</taxon>
    </lineage>
</organism>
<evidence type="ECO:0000255" key="1">
    <source>
        <dbReference type="HAMAP-Rule" id="MF_01547"/>
    </source>
</evidence>
<evidence type="ECO:0000256" key="2">
    <source>
        <dbReference type="SAM" id="MobiDB-lite"/>
    </source>
</evidence>
<name>RLME_RHIEC</name>
<comment type="function">
    <text evidence="1">Specifically methylates the uridine in position 2552 of 23S rRNA at the 2'-O position of the ribose in the fully assembled 50S ribosomal subunit.</text>
</comment>
<comment type="catalytic activity">
    <reaction evidence="1">
        <text>uridine(2552) in 23S rRNA + S-adenosyl-L-methionine = 2'-O-methyluridine(2552) in 23S rRNA + S-adenosyl-L-homocysteine + H(+)</text>
        <dbReference type="Rhea" id="RHEA:42720"/>
        <dbReference type="Rhea" id="RHEA-COMP:10202"/>
        <dbReference type="Rhea" id="RHEA-COMP:10203"/>
        <dbReference type="ChEBI" id="CHEBI:15378"/>
        <dbReference type="ChEBI" id="CHEBI:57856"/>
        <dbReference type="ChEBI" id="CHEBI:59789"/>
        <dbReference type="ChEBI" id="CHEBI:65315"/>
        <dbReference type="ChEBI" id="CHEBI:74478"/>
        <dbReference type="EC" id="2.1.1.166"/>
    </reaction>
</comment>
<comment type="subcellular location">
    <subcellularLocation>
        <location evidence="1">Cytoplasm</location>
    </subcellularLocation>
</comment>
<comment type="similarity">
    <text evidence="1">Belongs to the class I-like SAM-binding methyltransferase superfamily. RNA methyltransferase RlmE family.</text>
</comment>
<gene>
    <name evidence="1" type="primary">rlmE</name>
    <name evidence="1" type="synonym">ftsJ</name>
    <name evidence="1" type="synonym">rrmJ</name>
    <name type="ordered locus">RHE_CH00789</name>
</gene>
<sequence>MTKAPIAGNRTGRKLGQRVKNKKMKASSRQWLQRHINDPYVQRAQLEGYRARAAFKLLEIDEKYHILRGAKRIIDLGAAPGSWSQIAAKVTGSTDEDIRVAAIDFLEMAQLPGVWILQLDFLDPSAPGKLMEAVGGTPDLVISDMAAPTTGHHRTDHLRTMHLCEVAAHFAIEVLGEGGHFLTKTFQGGTERDLLAMLKQNFRQVVHVKPNSSRAESVEMFLLAKGFKGRKAEGDAEEA</sequence>
<dbReference type="EC" id="2.1.1.166" evidence="1"/>
<dbReference type="EMBL" id="CP000133">
    <property type="protein sequence ID" value="ABC89600.1"/>
    <property type="molecule type" value="Genomic_DNA"/>
</dbReference>
<dbReference type="RefSeq" id="WP_011424139.1">
    <property type="nucleotide sequence ID" value="NC_007761.1"/>
</dbReference>
<dbReference type="SMR" id="Q2KC36"/>
<dbReference type="KEGG" id="ret:RHE_CH00789"/>
<dbReference type="eggNOG" id="COG0293">
    <property type="taxonomic scope" value="Bacteria"/>
</dbReference>
<dbReference type="HOGENOM" id="CLU_009422_4_0_5"/>
<dbReference type="OrthoDB" id="9790080at2"/>
<dbReference type="Proteomes" id="UP000001936">
    <property type="component" value="Chromosome"/>
</dbReference>
<dbReference type="GO" id="GO:0005737">
    <property type="term" value="C:cytoplasm"/>
    <property type="evidence" value="ECO:0007669"/>
    <property type="project" value="UniProtKB-SubCell"/>
</dbReference>
<dbReference type="GO" id="GO:0008650">
    <property type="term" value="F:rRNA (uridine-2'-O-)-methyltransferase activity"/>
    <property type="evidence" value="ECO:0007669"/>
    <property type="project" value="UniProtKB-UniRule"/>
</dbReference>
<dbReference type="Gene3D" id="3.40.50.150">
    <property type="entry name" value="Vaccinia Virus protein VP39"/>
    <property type="match status" value="1"/>
</dbReference>
<dbReference type="HAMAP" id="MF_01547">
    <property type="entry name" value="RNA_methyltr_E"/>
    <property type="match status" value="1"/>
</dbReference>
<dbReference type="InterPro" id="IPR050082">
    <property type="entry name" value="RNA_methyltr_RlmE"/>
</dbReference>
<dbReference type="InterPro" id="IPR002877">
    <property type="entry name" value="RNA_MeTrfase_FtsJ_dom"/>
</dbReference>
<dbReference type="InterPro" id="IPR015507">
    <property type="entry name" value="rRNA-MeTfrase_E"/>
</dbReference>
<dbReference type="InterPro" id="IPR029063">
    <property type="entry name" value="SAM-dependent_MTases_sf"/>
</dbReference>
<dbReference type="PANTHER" id="PTHR10920">
    <property type="entry name" value="RIBOSOMAL RNA METHYLTRANSFERASE"/>
    <property type="match status" value="1"/>
</dbReference>
<dbReference type="PANTHER" id="PTHR10920:SF18">
    <property type="entry name" value="RRNA METHYLTRANSFERASE 2, MITOCHONDRIAL"/>
    <property type="match status" value="1"/>
</dbReference>
<dbReference type="Pfam" id="PF01728">
    <property type="entry name" value="FtsJ"/>
    <property type="match status" value="1"/>
</dbReference>
<dbReference type="PIRSF" id="PIRSF005461">
    <property type="entry name" value="23S_rRNA_mtase"/>
    <property type="match status" value="1"/>
</dbReference>
<dbReference type="SUPFAM" id="SSF53335">
    <property type="entry name" value="S-adenosyl-L-methionine-dependent methyltransferases"/>
    <property type="match status" value="1"/>
</dbReference>
<proteinExistence type="inferred from homology"/>
<accession>Q2KC36</accession>
<feature type="chain" id="PRO_0000282782" description="Ribosomal RNA large subunit methyltransferase E">
    <location>
        <begin position="1"/>
        <end position="239"/>
    </location>
</feature>
<feature type="region of interest" description="Disordered" evidence="2">
    <location>
        <begin position="1"/>
        <end position="20"/>
    </location>
</feature>
<feature type="compositionally biased region" description="Basic residues" evidence="2">
    <location>
        <begin position="11"/>
        <end position="20"/>
    </location>
</feature>
<feature type="active site" description="Proton acceptor" evidence="1">
    <location>
        <position position="184"/>
    </location>
</feature>
<feature type="binding site" evidence="1">
    <location>
        <position position="81"/>
    </location>
    <ligand>
        <name>S-adenosyl-L-methionine</name>
        <dbReference type="ChEBI" id="CHEBI:59789"/>
    </ligand>
</feature>
<feature type="binding site" evidence="1">
    <location>
        <position position="83"/>
    </location>
    <ligand>
        <name>S-adenosyl-L-methionine</name>
        <dbReference type="ChEBI" id="CHEBI:59789"/>
    </ligand>
</feature>
<feature type="binding site" evidence="1">
    <location>
        <position position="104"/>
    </location>
    <ligand>
        <name>S-adenosyl-L-methionine</name>
        <dbReference type="ChEBI" id="CHEBI:59789"/>
    </ligand>
</feature>
<feature type="binding site" evidence="1">
    <location>
        <position position="120"/>
    </location>
    <ligand>
        <name>S-adenosyl-L-methionine</name>
        <dbReference type="ChEBI" id="CHEBI:59789"/>
    </ligand>
</feature>
<feature type="binding site" evidence="1">
    <location>
        <position position="144"/>
    </location>
    <ligand>
        <name>S-adenosyl-L-methionine</name>
        <dbReference type="ChEBI" id="CHEBI:59789"/>
    </ligand>
</feature>
<protein>
    <recommendedName>
        <fullName evidence="1">Ribosomal RNA large subunit methyltransferase E</fullName>
        <ecNumber evidence="1">2.1.1.166</ecNumber>
    </recommendedName>
    <alternativeName>
        <fullName evidence="1">23S rRNA Um2552 methyltransferase</fullName>
    </alternativeName>
    <alternativeName>
        <fullName evidence="1">rRNA (uridine-2'-O-)-methyltransferase</fullName>
    </alternativeName>
</protein>